<dbReference type="EMBL" id="AE017223">
    <property type="protein sequence ID" value="AAX75097.1"/>
    <property type="molecule type" value="Genomic_DNA"/>
</dbReference>
<dbReference type="RefSeq" id="WP_002964877.1">
    <property type="nucleotide sequence ID" value="NC_006932.1"/>
</dbReference>
<dbReference type="SMR" id="Q57B87"/>
<dbReference type="EnsemblBacteria" id="AAX75097">
    <property type="protein sequence ID" value="AAX75097"/>
    <property type="gene ID" value="BruAb1_1780"/>
</dbReference>
<dbReference type="KEGG" id="bmb:BruAb1_1780"/>
<dbReference type="HOGENOM" id="CLU_050669_0_1_5"/>
<dbReference type="Proteomes" id="UP000000540">
    <property type="component" value="Chromosome I"/>
</dbReference>
<dbReference type="GO" id="GO:0005886">
    <property type="term" value="C:plasma membrane"/>
    <property type="evidence" value="ECO:0007669"/>
    <property type="project" value="UniProtKB-SubCell"/>
</dbReference>
<dbReference type="GO" id="GO:0045259">
    <property type="term" value="C:proton-transporting ATP synthase complex"/>
    <property type="evidence" value="ECO:0007669"/>
    <property type="project" value="UniProtKB-KW"/>
</dbReference>
<dbReference type="GO" id="GO:0005524">
    <property type="term" value="F:ATP binding"/>
    <property type="evidence" value="ECO:0007669"/>
    <property type="project" value="UniProtKB-UniRule"/>
</dbReference>
<dbReference type="GO" id="GO:0046933">
    <property type="term" value="F:proton-transporting ATP synthase activity, rotational mechanism"/>
    <property type="evidence" value="ECO:0007669"/>
    <property type="project" value="UniProtKB-UniRule"/>
</dbReference>
<dbReference type="GO" id="GO:0042777">
    <property type="term" value="P:proton motive force-driven plasma membrane ATP synthesis"/>
    <property type="evidence" value="ECO:0007669"/>
    <property type="project" value="UniProtKB-UniRule"/>
</dbReference>
<dbReference type="CDD" id="cd12151">
    <property type="entry name" value="F1-ATPase_gamma"/>
    <property type="match status" value="1"/>
</dbReference>
<dbReference type="FunFam" id="1.10.287.80:FF:000001">
    <property type="entry name" value="ATP synthase gamma chain"/>
    <property type="match status" value="1"/>
</dbReference>
<dbReference type="FunFam" id="1.10.287.80:FF:000003">
    <property type="entry name" value="ATP synthase gamma chain, chloroplastic"/>
    <property type="match status" value="1"/>
</dbReference>
<dbReference type="Gene3D" id="3.40.1380.10">
    <property type="match status" value="1"/>
</dbReference>
<dbReference type="Gene3D" id="1.10.287.80">
    <property type="entry name" value="ATP synthase, gamma subunit, helix hairpin domain"/>
    <property type="match status" value="1"/>
</dbReference>
<dbReference type="HAMAP" id="MF_00815">
    <property type="entry name" value="ATP_synth_gamma_bact"/>
    <property type="match status" value="1"/>
</dbReference>
<dbReference type="InterPro" id="IPR035968">
    <property type="entry name" value="ATP_synth_F1_ATPase_gsu"/>
</dbReference>
<dbReference type="InterPro" id="IPR000131">
    <property type="entry name" value="ATP_synth_F1_gsu"/>
</dbReference>
<dbReference type="InterPro" id="IPR023632">
    <property type="entry name" value="ATP_synth_F1_gsu_CS"/>
</dbReference>
<dbReference type="NCBIfam" id="TIGR01146">
    <property type="entry name" value="ATPsyn_F1gamma"/>
    <property type="match status" value="1"/>
</dbReference>
<dbReference type="NCBIfam" id="NF004146">
    <property type="entry name" value="PRK05621.1-4"/>
    <property type="match status" value="1"/>
</dbReference>
<dbReference type="PANTHER" id="PTHR11693">
    <property type="entry name" value="ATP SYNTHASE GAMMA CHAIN"/>
    <property type="match status" value="1"/>
</dbReference>
<dbReference type="PANTHER" id="PTHR11693:SF22">
    <property type="entry name" value="ATP SYNTHASE SUBUNIT GAMMA, MITOCHONDRIAL"/>
    <property type="match status" value="1"/>
</dbReference>
<dbReference type="Pfam" id="PF00231">
    <property type="entry name" value="ATP-synt"/>
    <property type="match status" value="1"/>
</dbReference>
<dbReference type="PIRSF" id="PIRSF039089">
    <property type="entry name" value="ATP_synthase_gamma"/>
    <property type="match status" value="1"/>
</dbReference>
<dbReference type="PRINTS" id="PR00126">
    <property type="entry name" value="ATPASEGAMMA"/>
</dbReference>
<dbReference type="SUPFAM" id="SSF52943">
    <property type="entry name" value="ATP synthase (F1-ATPase), gamma subunit"/>
    <property type="match status" value="1"/>
</dbReference>
<dbReference type="PROSITE" id="PS00153">
    <property type="entry name" value="ATPASE_GAMMA"/>
    <property type="match status" value="1"/>
</dbReference>
<feature type="chain" id="PRO_0000073249" description="ATP synthase gamma chain">
    <location>
        <begin position="1"/>
        <end position="292"/>
    </location>
</feature>
<evidence type="ECO:0000255" key="1">
    <source>
        <dbReference type="HAMAP-Rule" id="MF_00815"/>
    </source>
</evidence>
<keyword id="KW-0066">ATP synthesis</keyword>
<keyword id="KW-0997">Cell inner membrane</keyword>
<keyword id="KW-1003">Cell membrane</keyword>
<keyword id="KW-0139">CF(1)</keyword>
<keyword id="KW-0375">Hydrogen ion transport</keyword>
<keyword id="KW-0406">Ion transport</keyword>
<keyword id="KW-0472">Membrane</keyword>
<keyword id="KW-0813">Transport</keyword>
<reference key="1">
    <citation type="journal article" date="2005" name="J. Bacteriol.">
        <title>Completion of the genome sequence of Brucella abortus and comparison to the highly similar genomes of Brucella melitensis and Brucella suis.</title>
        <authorList>
            <person name="Halling S.M."/>
            <person name="Peterson-Burch B.D."/>
            <person name="Bricker B.J."/>
            <person name="Zuerner R.L."/>
            <person name="Qing Z."/>
            <person name="Li L.-L."/>
            <person name="Kapur V."/>
            <person name="Alt D.P."/>
            <person name="Olsen S.C."/>
        </authorList>
    </citation>
    <scope>NUCLEOTIDE SEQUENCE [LARGE SCALE GENOMIC DNA]</scope>
    <source>
        <strain>9-941</strain>
    </source>
</reference>
<proteinExistence type="inferred from homology"/>
<accession>Q57B87</accession>
<name>ATPG_BRUAB</name>
<protein>
    <recommendedName>
        <fullName evidence="1">ATP synthase gamma chain</fullName>
    </recommendedName>
    <alternativeName>
        <fullName evidence="1">ATP synthase F1 sector gamma subunit</fullName>
    </alternativeName>
    <alternativeName>
        <fullName evidence="1">F-ATPase gamma subunit</fullName>
    </alternativeName>
</protein>
<gene>
    <name evidence="1" type="primary">atpG</name>
    <name type="ordered locus">BruAb1_1780</name>
</gene>
<organism>
    <name type="scientific">Brucella abortus biovar 1 (strain 9-941)</name>
    <dbReference type="NCBI Taxonomy" id="262698"/>
    <lineage>
        <taxon>Bacteria</taxon>
        <taxon>Pseudomonadati</taxon>
        <taxon>Pseudomonadota</taxon>
        <taxon>Alphaproteobacteria</taxon>
        <taxon>Hyphomicrobiales</taxon>
        <taxon>Brucellaceae</taxon>
        <taxon>Brucella/Ochrobactrum group</taxon>
        <taxon>Brucella</taxon>
    </lineage>
</organism>
<sequence>MPSLKDLRNRIASVKATQKITKAMQMVAAAKLRRAQEAAEAARPYSQRMGAVLANIAQNVSGEDAPALMVGTGKDDVHLLVVCTAKRGLCGGFNSQIARLARDHARKLLAEGKTVKIITVGKKGADILRREFSALLHDHVDLREVKQLAFVHADQIGHKIIKLFEEGAFDVCTLFYSEFKSVISQVSTAQQLIPASADNEAEMETAGDAIYEYEPDPAAILSTLIPRNISVQIFRALLENVAGEMGAKMSAMDNATRNAGDMINKLSITYNRQRQAQITKELIEIISGAEAL</sequence>
<comment type="function">
    <text evidence="1">Produces ATP from ADP in the presence of a proton gradient across the membrane. The gamma chain is believed to be important in regulating ATPase activity and the flow of protons through the CF(0) complex.</text>
</comment>
<comment type="subunit">
    <text evidence="1">F-type ATPases have 2 components, CF(1) - the catalytic core - and CF(0) - the membrane proton channel. CF(1) has five subunits: alpha(3), beta(3), gamma(1), delta(1), epsilon(1). CF(0) has three main subunits: a, b and c.</text>
</comment>
<comment type="subcellular location">
    <subcellularLocation>
        <location evidence="1">Cell inner membrane</location>
        <topology evidence="1">Peripheral membrane protein</topology>
    </subcellularLocation>
</comment>
<comment type="similarity">
    <text evidence="1">Belongs to the ATPase gamma chain family.</text>
</comment>